<feature type="chain" id="PRO_0000134991" description="Nicotinamide-nucleotide adenylyltransferase">
    <location>
        <begin position="1"/>
        <end position="173"/>
    </location>
</feature>
<evidence type="ECO:0000255" key="1">
    <source>
        <dbReference type="HAMAP-Rule" id="MF_00243"/>
    </source>
</evidence>
<evidence type="ECO:0000305" key="2"/>
<keyword id="KW-0067">ATP-binding</keyword>
<keyword id="KW-0963">Cytoplasm</keyword>
<keyword id="KW-0520">NAD</keyword>
<keyword id="KW-0547">Nucleotide-binding</keyword>
<keyword id="KW-0548">Nucleotidyltransferase</keyword>
<keyword id="KW-0662">Pyridine nucleotide biosynthesis</keyword>
<keyword id="KW-1185">Reference proteome</keyword>
<keyword id="KW-0808">Transferase</keyword>
<reference key="1">
    <citation type="journal article" date="2002" name="Genome Res.">
        <title>The genome of Methanosarcina acetivorans reveals extensive metabolic and physiological diversity.</title>
        <authorList>
            <person name="Galagan J.E."/>
            <person name="Nusbaum C."/>
            <person name="Roy A."/>
            <person name="Endrizzi M.G."/>
            <person name="Macdonald P."/>
            <person name="FitzHugh W."/>
            <person name="Calvo S."/>
            <person name="Engels R."/>
            <person name="Smirnov S."/>
            <person name="Atnoor D."/>
            <person name="Brown A."/>
            <person name="Allen N."/>
            <person name="Naylor J."/>
            <person name="Stange-Thomann N."/>
            <person name="DeArellano K."/>
            <person name="Johnson R."/>
            <person name="Linton L."/>
            <person name="McEwan P."/>
            <person name="McKernan K."/>
            <person name="Talamas J."/>
            <person name="Tirrell A."/>
            <person name="Ye W."/>
            <person name="Zimmer A."/>
            <person name="Barber R.D."/>
            <person name="Cann I."/>
            <person name="Graham D.E."/>
            <person name="Grahame D.A."/>
            <person name="Guss A.M."/>
            <person name="Hedderich R."/>
            <person name="Ingram-Smith C."/>
            <person name="Kuettner H.C."/>
            <person name="Krzycki J.A."/>
            <person name="Leigh J.A."/>
            <person name="Li W."/>
            <person name="Liu J."/>
            <person name="Mukhopadhyay B."/>
            <person name="Reeve J.N."/>
            <person name="Smith K."/>
            <person name="Springer T.A."/>
            <person name="Umayam L.A."/>
            <person name="White O."/>
            <person name="White R.H."/>
            <person name="de Macario E.C."/>
            <person name="Ferry J.G."/>
            <person name="Jarrell K.F."/>
            <person name="Jing H."/>
            <person name="Macario A.J.L."/>
            <person name="Paulsen I.T."/>
            <person name="Pritchett M."/>
            <person name="Sowers K.R."/>
            <person name="Swanson R.V."/>
            <person name="Zinder S.H."/>
            <person name="Lander E."/>
            <person name="Metcalf W.W."/>
            <person name="Birren B."/>
        </authorList>
    </citation>
    <scope>NUCLEOTIDE SEQUENCE [LARGE SCALE GENOMIC DNA]</scope>
    <source>
        <strain>ATCC 35395 / DSM 2834 / JCM 12185 / C2A</strain>
    </source>
</reference>
<comment type="catalytic activity">
    <reaction evidence="1">
        <text>beta-nicotinamide D-ribonucleotide + ATP + H(+) = diphosphate + NAD(+)</text>
        <dbReference type="Rhea" id="RHEA:21360"/>
        <dbReference type="ChEBI" id="CHEBI:14649"/>
        <dbReference type="ChEBI" id="CHEBI:15378"/>
        <dbReference type="ChEBI" id="CHEBI:30616"/>
        <dbReference type="ChEBI" id="CHEBI:33019"/>
        <dbReference type="ChEBI" id="CHEBI:57540"/>
        <dbReference type="EC" id="2.7.7.1"/>
    </reaction>
</comment>
<comment type="pathway">
    <text evidence="1">Cofactor biosynthesis; NAD(+) biosynthesis; NAD(+) from nicotinamide D-ribonucleotide: step 1/1.</text>
</comment>
<comment type="subcellular location">
    <subcellularLocation>
        <location evidence="1">Cytoplasm</location>
    </subcellularLocation>
</comment>
<comment type="similarity">
    <text evidence="1">Belongs to the archaeal NMN adenylyltransferase family.</text>
</comment>
<comment type="sequence caution" evidence="2">
    <conflict type="erroneous initiation">
        <sequence resource="EMBL-CDS" id="AAM07083"/>
    </conflict>
</comment>
<name>NADM_METAC</name>
<sequence>MMRAFYIGRFQPYHFGHHAVITRIAEEVDELVIGIGSAQKSHEATDPFTAGERVLMLYNALENLPVRHYVLPIEDVRYNSIWVHHVASRTPRFDVVYSNNPLVIQLFREAGFCVKESPLYVRERYSGTEIRRRMIAGEKWEHLVPKPVAETIKDIDGITRLRNVSASDSNFSL</sequence>
<dbReference type="EC" id="2.7.7.1" evidence="1"/>
<dbReference type="EMBL" id="AE010299">
    <property type="protein sequence ID" value="AAM07083.1"/>
    <property type="status" value="ALT_INIT"/>
    <property type="molecule type" value="Genomic_DNA"/>
</dbReference>
<dbReference type="RefSeq" id="WP_048065785.1">
    <property type="nucleotide sequence ID" value="NC_003552.1"/>
</dbReference>
<dbReference type="SMR" id="Q8TJP9"/>
<dbReference type="FunCoup" id="Q8TJP9">
    <property type="interactions" value="11"/>
</dbReference>
<dbReference type="STRING" id="188937.MA_3731"/>
<dbReference type="EnsemblBacteria" id="AAM07083">
    <property type="protein sequence ID" value="AAM07083"/>
    <property type="gene ID" value="MA_3731"/>
</dbReference>
<dbReference type="GeneID" id="1475624"/>
<dbReference type="KEGG" id="mac:MA_3731"/>
<dbReference type="HOGENOM" id="CLU_108783_0_0_2"/>
<dbReference type="InParanoid" id="Q8TJP9"/>
<dbReference type="OrthoDB" id="264480at2157"/>
<dbReference type="PhylomeDB" id="Q8TJP9"/>
<dbReference type="UniPathway" id="UPA00253">
    <property type="reaction ID" value="UER00600"/>
</dbReference>
<dbReference type="Proteomes" id="UP000002487">
    <property type="component" value="Chromosome"/>
</dbReference>
<dbReference type="GO" id="GO:0005737">
    <property type="term" value="C:cytoplasm"/>
    <property type="evidence" value="ECO:0007669"/>
    <property type="project" value="UniProtKB-SubCell"/>
</dbReference>
<dbReference type="GO" id="GO:0005524">
    <property type="term" value="F:ATP binding"/>
    <property type="evidence" value="ECO:0007669"/>
    <property type="project" value="UniProtKB-KW"/>
</dbReference>
<dbReference type="GO" id="GO:0000309">
    <property type="term" value="F:nicotinamide-nucleotide adenylyltransferase activity"/>
    <property type="evidence" value="ECO:0007669"/>
    <property type="project" value="UniProtKB-UniRule"/>
</dbReference>
<dbReference type="GO" id="GO:0009435">
    <property type="term" value="P:NAD biosynthetic process"/>
    <property type="evidence" value="ECO:0007669"/>
    <property type="project" value="UniProtKB-UniRule"/>
</dbReference>
<dbReference type="CDD" id="cd02166">
    <property type="entry name" value="NMNAT_Archaea"/>
    <property type="match status" value="1"/>
</dbReference>
<dbReference type="Gene3D" id="3.40.50.620">
    <property type="entry name" value="HUPs"/>
    <property type="match status" value="1"/>
</dbReference>
<dbReference type="HAMAP" id="MF_00243">
    <property type="entry name" value="NMN_adenylyltr"/>
    <property type="match status" value="1"/>
</dbReference>
<dbReference type="InterPro" id="IPR004821">
    <property type="entry name" value="Cyt_trans-like"/>
</dbReference>
<dbReference type="InterPro" id="IPR006418">
    <property type="entry name" value="NMN_Atrans_arc"/>
</dbReference>
<dbReference type="InterPro" id="IPR014729">
    <property type="entry name" value="Rossmann-like_a/b/a_fold"/>
</dbReference>
<dbReference type="NCBIfam" id="TIGR01527">
    <property type="entry name" value="arch_NMN_Atrans"/>
    <property type="match status" value="1"/>
</dbReference>
<dbReference type="NCBIfam" id="TIGR00125">
    <property type="entry name" value="cyt_tran_rel"/>
    <property type="match status" value="1"/>
</dbReference>
<dbReference type="NCBIfam" id="NF002243">
    <property type="entry name" value="PRK01153.1"/>
    <property type="match status" value="1"/>
</dbReference>
<dbReference type="PANTHER" id="PTHR21342:SF0">
    <property type="entry name" value="BIFUNCTIONAL NMN ADENYLYLTRANSFERASE_NUDIX HYDROLASE"/>
    <property type="match status" value="1"/>
</dbReference>
<dbReference type="PANTHER" id="PTHR21342">
    <property type="entry name" value="PHOSPHOPANTETHEINE ADENYLYLTRANSFERASE"/>
    <property type="match status" value="1"/>
</dbReference>
<dbReference type="Pfam" id="PF01467">
    <property type="entry name" value="CTP_transf_like"/>
    <property type="match status" value="1"/>
</dbReference>
<dbReference type="SUPFAM" id="SSF52374">
    <property type="entry name" value="Nucleotidylyl transferase"/>
    <property type="match status" value="1"/>
</dbReference>
<gene>
    <name type="ordered locus">MA_3731</name>
</gene>
<proteinExistence type="inferred from homology"/>
<protein>
    <recommendedName>
        <fullName evidence="1">Nicotinamide-nucleotide adenylyltransferase</fullName>
        <ecNumber evidence="1">2.7.7.1</ecNumber>
    </recommendedName>
    <alternativeName>
        <fullName evidence="1">NAD(+) diphosphorylase</fullName>
    </alternativeName>
    <alternativeName>
        <fullName evidence="1">NAD(+) pyrophosphorylase</fullName>
    </alternativeName>
    <alternativeName>
        <fullName evidence="1">NMN adenylyltransferase</fullName>
    </alternativeName>
</protein>
<accession>Q8TJP9</accession>
<organism>
    <name type="scientific">Methanosarcina acetivorans (strain ATCC 35395 / DSM 2834 / JCM 12185 / C2A)</name>
    <dbReference type="NCBI Taxonomy" id="188937"/>
    <lineage>
        <taxon>Archaea</taxon>
        <taxon>Methanobacteriati</taxon>
        <taxon>Methanobacteriota</taxon>
        <taxon>Stenosarchaea group</taxon>
        <taxon>Methanomicrobia</taxon>
        <taxon>Methanosarcinales</taxon>
        <taxon>Methanosarcinaceae</taxon>
        <taxon>Methanosarcina</taxon>
    </lineage>
</organism>